<comment type="function">
    <text evidence="1">One of the components of the core complex of photosystem II (PSII). PSII is a light-driven water:plastoquinone oxidoreductase that uses light energy to abstract electrons from H(2)O, generating O(2) and a proton gradient subsequently used for ATP formation. It consists of a core antenna complex that captures photons, and an electron transfer chain that converts photonic excitation into a charge separation. This subunit is found at the monomer-monomer interface.</text>
</comment>
<comment type="subunit">
    <text evidence="2">PSII is composed of 1 copy each of membrane proteins PsbA, PsbB, PsbC, PsbD, PsbE, PsbF, PsbH, PsbI, PsbJ, PsbK, PsbL, PsbM, PsbT, PsbX, PsbY, Psb30/Ycf12, peripheral proteins PsbO, CyanoQ (PsbQ), PsbU, PsbV and a large number of cofactors. It forms dimeric complexes.</text>
</comment>
<comment type="subcellular location">
    <subcellularLocation>
        <location evidence="1">Cellular thylakoid membrane</location>
        <topology evidence="1">Single-pass membrane protein</topology>
    </subcellularLocation>
</comment>
<comment type="similarity">
    <text evidence="1">Belongs to the PsbM family.</text>
</comment>
<keyword id="KW-0472">Membrane</keyword>
<keyword id="KW-0602">Photosynthesis</keyword>
<keyword id="KW-0604">Photosystem II</keyword>
<keyword id="KW-0674">Reaction center</keyword>
<keyword id="KW-0793">Thylakoid</keyword>
<keyword id="KW-0812">Transmembrane</keyword>
<keyword id="KW-1133">Transmembrane helix</keyword>
<feature type="chain" id="PRO_1000025957" description="Photosystem II reaction center protein M">
    <location>
        <begin position="1"/>
        <end position="50"/>
    </location>
</feature>
<feature type="transmembrane region" description="Helical" evidence="1">
    <location>
        <begin position="7"/>
        <end position="27"/>
    </location>
</feature>
<dbReference type="EMBL" id="CP000552">
    <property type="protein sequence ID" value="ABM71558.1"/>
    <property type="molecule type" value="Genomic_DNA"/>
</dbReference>
<dbReference type="RefSeq" id="WP_011819666.1">
    <property type="nucleotide sequence ID" value="NC_008817.1"/>
</dbReference>
<dbReference type="SMR" id="A2BUU7"/>
<dbReference type="STRING" id="167542.P9515_03491"/>
<dbReference type="GeneID" id="60201078"/>
<dbReference type="KEGG" id="pmc:P9515_03491"/>
<dbReference type="eggNOG" id="ENOG5030KVU">
    <property type="taxonomic scope" value="Bacteria"/>
</dbReference>
<dbReference type="HOGENOM" id="CLU_215415_0_0_3"/>
<dbReference type="OrthoDB" id="532820at2"/>
<dbReference type="Proteomes" id="UP000001589">
    <property type="component" value="Chromosome"/>
</dbReference>
<dbReference type="GO" id="GO:0009523">
    <property type="term" value="C:photosystem II"/>
    <property type="evidence" value="ECO:0007669"/>
    <property type="project" value="UniProtKB-KW"/>
</dbReference>
<dbReference type="GO" id="GO:0031676">
    <property type="term" value="C:plasma membrane-derived thylakoid membrane"/>
    <property type="evidence" value="ECO:0007669"/>
    <property type="project" value="UniProtKB-SubCell"/>
</dbReference>
<dbReference type="GO" id="GO:0019684">
    <property type="term" value="P:photosynthesis, light reaction"/>
    <property type="evidence" value="ECO:0007669"/>
    <property type="project" value="InterPro"/>
</dbReference>
<dbReference type="HAMAP" id="MF_00438">
    <property type="entry name" value="PSII_PsbM"/>
    <property type="match status" value="1"/>
</dbReference>
<dbReference type="InterPro" id="IPR007826">
    <property type="entry name" value="PSII_PsbM"/>
</dbReference>
<dbReference type="InterPro" id="IPR037269">
    <property type="entry name" value="PSII_PsbM_sf"/>
</dbReference>
<dbReference type="NCBIfam" id="NF010694">
    <property type="entry name" value="PRK14094.1"/>
    <property type="match status" value="1"/>
</dbReference>
<dbReference type="NCBIfam" id="TIGR03038">
    <property type="entry name" value="PS_II_psbM"/>
    <property type="match status" value="1"/>
</dbReference>
<dbReference type="Pfam" id="PF05151">
    <property type="entry name" value="PsbM"/>
    <property type="match status" value="1"/>
</dbReference>
<dbReference type="SUPFAM" id="SSF161033">
    <property type="entry name" value="Photosystem II reaction center protein M, PsbM"/>
    <property type="match status" value="1"/>
</dbReference>
<evidence type="ECO:0000255" key="1">
    <source>
        <dbReference type="HAMAP-Rule" id="MF_00438"/>
    </source>
</evidence>
<evidence type="ECO:0000305" key="2"/>
<organism>
    <name type="scientific">Prochlorococcus marinus (strain MIT 9515)</name>
    <dbReference type="NCBI Taxonomy" id="167542"/>
    <lineage>
        <taxon>Bacteria</taxon>
        <taxon>Bacillati</taxon>
        <taxon>Cyanobacteriota</taxon>
        <taxon>Cyanophyceae</taxon>
        <taxon>Synechococcales</taxon>
        <taxon>Prochlorococcaceae</taxon>
        <taxon>Prochlorococcus</taxon>
    </lineage>
</organism>
<accession>A2BUU7</accession>
<protein>
    <recommendedName>
        <fullName evidence="1">Photosystem II reaction center protein M</fullName>
        <shortName evidence="1">PSII-M</shortName>
    </recommendedName>
</protein>
<gene>
    <name evidence="1" type="primary">psbM</name>
    <name type="ordered locus">P9515_03491</name>
</gene>
<reference key="1">
    <citation type="journal article" date="2007" name="PLoS Genet.">
        <title>Patterns and implications of gene gain and loss in the evolution of Prochlorococcus.</title>
        <authorList>
            <person name="Kettler G.C."/>
            <person name="Martiny A.C."/>
            <person name="Huang K."/>
            <person name="Zucker J."/>
            <person name="Coleman M.L."/>
            <person name="Rodrigue S."/>
            <person name="Chen F."/>
            <person name="Lapidus A."/>
            <person name="Ferriera S."/>
            <person name="Johnson J."/>
            <person name="Steglich C."/>
            <person name="Church G.M."/>
            <person name="Richardson P."/>
            <person name="Chisholm S.W."/>
        </authorList>
    </citation>
    <scope>NUCLEOTIDE SEQUENCE [LARGE SCALE GENOMIC DNA]</scope>
    <source>
        <strain>MIT 9515</strain>
    </source>
</reference>
<sequence>METTNFGFVASLLFVGVPTIFLIGLFISTQDGEKSSFYSDSGKGKLGPKR</sequence>
<proteinExistence type="inferred from homology"/>
<name>PSBM_PROM5</name>